<gene>
    <name type="primary">SEC23</name>
    <name type="ORF">CIMG_04812</name>
</gene>
<sequence>MDYEALKDQWSEIEDRDGIRLSWNTFPSTRMEASRLVVPIGAIYTPLKERPDAPLLQYEPVTCKQPCRAVLNPYANVDIRARIWICPFCLQRNPLPPHYKDITENTIPPELHPQSTTIEYQLARPAPAPPIFLFVVDTCQEEDGLKAVKDSLVMSLSLLPPNALVGLITFGTMAQVHELGYTECAKSYVFKGSKDYTPKQIQEMLGLLAPGLRAPAPQQQPGRPAPAVAPAARFLLPVQQADFQITNVLEQLQQDPWPVANDRRPLRCTGVALSVAIGLMETSFQNAGGRIMLFTSGPATEGPGLVVGPQLREPIRSHHDIDRDNIKYYKKAVKFYDNLAKRVSHNGHIVDIFIGSLDQVGLLEMKGLVNSTGGHMVLTDAFTSSQFKQSFVRVFDRDANDNLVMGFNAALEVLTTKELKVTGLIGHAVSLNKKSSSVGETECGIGNTCSWKMCGIDPAASYGIYFEIANQGGPAPMQQGPHKAMMQFLTYYQHSSGQYHLRVTTVARPLSSPAGDSALAQSFDQEAAAVLMARIAVFKADVDDGPDVLRWVDRMLIRLCSRFADYRKDDPTSFRLEKNFTLYPQFMFHLRRSQFLQVFNNSPDETTFYRHVLNHEFVGDSLIMIQPTLDSYSLDHEGAQPVLLDSASIQPTHILLLDTFFHILIFHGETMAAWRKAGYQDKEGYDNFRAILEQPKEDAKELIQDRFPLPRFIICDAGGSQARFLLSKLNPSTTHSSGGYGGTQSGQTIFTDDVSLHTFMEHLMKLAVSGTN</sequence>
<accession>Q1DY01</accession>
<accession>J3KET6</accession>
<evidence type="ECO:0000250" key="1"/>
<evidence type="ECO:0000305" key="2"/>
<protein>
    <recommendedName>
        <fullName>Protein transport protein SEC23</fullName>
    </recommendedName>
</protein>
<name>SEC23_COCIM</name>
<comment type="function">
    <text evidence="1">Component of the coat protein complex II (COPII) which promotes the formation of transport vesicles from the endoplasmic reticulum (ER). The coat has two main functions, the physical deformation of the endoplasmic reticulum membrane into vesicles and the selection of cargo molecules (By similarity).</text>
</comment>
<comment type="subunit">
    <text evidence="1">The COPII coat is composed of at least 5 proteins: the SEC23/24 complex, the SEC13/31 complex, and the protein SAR1.</text>
</comment>
<comment type="subcellular location">
    <subcellularLocation>
        <location evidence="1">Cytoplasm</location>
    </subcellularLocation>
    <subcellularLocation>
        <location evidence="1">Cytoplasmic vesicle</location>
        <location evidence="1">COPII-coated vesicle membrane</location>
        <topology evidence="1">Peripheral membrane protein</topology>
        <orientation evidence="1">Cytoplasmic side</orientation>
    </subcellularLocation>
    <subcellularLocation>
        <location evidence="1">Endoplasmic reticulum membrane</location>
        <topology evidence="1">Peripheral membrane protein</topology>
        <orientation evidence="1">Cytoplasmic side</orientation>
    </subcellularLocation>
    <subcellularLocation>
        <location evidence="1">Golgi apparatus membrane</location>
        <topology evidence="1">Peripheral membrane protein</topology>
        <orientation evidence="1">Cytoplasmic side</orientation>
    </subcellularLocation>
</comment>
<comment type="similarity">
    <text evidence="2">Belongs to the SEC23/SEC24 family. SEC23 subfamily.</text>
</comment>
<proteinExistence type="inferred from homology"/>
<feature type="chain" id="PRO_0000295459" description="Protein transport protein SEC23">
    <location>
        <begin position="1"/>
        <end position="772"/>
    </location>
</feature>
<feature type="binding site" evidence="1">
    <location>
        <position position="63"/>
    </location>
    <ligand>
        <name>Zn(2+)</name>
        <dbReference type="ChEBI" id="CHEBI:29105"/>
    </ligand>
</feature>
<feature type="binding site" evidence="1">
    <location>
        <position position="67"/>
    </location>
    <ligand>
        <name>Zn(2+)</name>
        <dbReference type="ChEBI" id="CHEBI:29105"/>
    </ligand>
</feature>
<feature type="binding site" evidence="1">
    <location>
        <position position="86"/>
    </location>
    <ligand>
        <name>Zn(2+)</name>
        <dbReference type="ChEBI" id="CHEBI:29105"/>
    </ligand>
</feature>
<feature type="binding site" evidence="1">
    <location>
        <position position="89"/>
    </location>
    <ligand>
        <name>Zn(2+)</name>
        <dbReference type="ChEBI" id="CHEBI:29105"/>
    </ligand>
</feature>
<dbReference type="EMBL" id="GG704914">
    <property type="protein sequence ID" value="EAS33788.3"/>
    <property type="molecule type" value="Genomic_DNA"/>
</dbReference>
<dbReference type="RefSeq" id="XP_001245371.1">
    <property type="nucleotide sequence ID" value="XM_001245370.2"/>
</dbReference>
<dbReference type="SMR" id="Q1DY01"/>
<dbReference type="FunCoup" id="Q1DY01">
    <property type="interactions" value="991"/>
</dbReference>
<dbReference type="STRING" id="246410.Q1DY01"/>
<dbReference type="GeneID" id="4563551"/>
<dbReference type="KEGG" id="cim:CIMG_04812"/>
<dbReference type="VEuPathDB" id="FungiDB:CIMG_04812"/>
<dbReference type="InParanoid" id="Q1DY01"/>
<dbReference type="OMA" id="FPPHYAE"/>
<dbReference type="OrthoDB" id="10256289at2759"/>
<dbReference type="Proteomes" id="UP000001261">
    <property type="component" value="Unassembled WGS sequence"/>
</dbReference>
<dbReference type="GO" id="GO:0030127">
    <property type="term" value="C:COPII vesicle coat"/>
    <property type="evidence" value="ECO:0007669"/>
    <property type="project" value="InterPro"/>
</dbReference>
<dbReference type="GO" id="GO:0070971">
    <property type="term" value="C:endoplasmic reticulum exit site"/>
    <property type="evidence" value="ECO:0007669"/>
    <property type="project" value="TreeGrafter"/>
</dbReference>
<dbReference type="GO" id="GO:0005789">
    <property type="term" value="C:endoplasmic reticulum membrane"/>
    <property type="evidence" value="ECO:0007669"/>
    <property type="project" value="UniProtKB-SubCell"/>
</dbReference>
<dbReference type="GO" id="GO:0000139">
    <property type="term" value="C:Golgi membrane"/>
    <property type="evidence" value="ECO:0007669"/>
    <property type="project" value="UniProtKB-SubCell"/>
</dbReference>
<dbReference type="GO" id="GO:0005096">
    <property type="term" value="F:GTPase activator activity"/>
    <property type="evidence" value="ECO:0007669"/>
    <property type="project" value="TreeGrafter"/>
</dbReference>
<dbReference type="GO" id="GO:0008270">
    <property type="term" value="F:zinc ion binding"/>
    <property type="evidence" value="ECO:0007669"/>
    <property type="project" value="InterPro"/>
</dbReference>
<dbReference type="GO" id="GO:0090110">
    <property type="term" value="P:COPII-coated vesicle cargo loading"/>
    <property type="evidence" value="ECO:0007669"/>
    <property type="project" value="TreeGrafter"/>
</dbReference>
<dbReference type="GO" id="GO:0006886">
    <property type="term" value="P:intracellular protein transport"/>
    <property type="evidence" value="ECO:0007669"/>
    <property type="project" value="InterPro"/>
</dbReference>
<dbReference type="CDD" id="cd01478">
    <property type="entry name" value="Sec23-like"/>
    <property type="match status" value="1"/>
</dbReference>
<dbReference type="CDD" id="cd11287">
    <property type="entry name" value="Sec23_C"/>
    <property type="match status" value="1"/>
</dbReference>
<dbReference type="FunFam" id="1.20.120.730:FF:000001">
    <property type="entry name" value="Protein transport protein SEC23"/>
    <property type="match status" value="1"/>
</dbReference>
<dbReference type="FunFam" id="2.30.30.380:FF:000001">
    <property type="entry name" value="Protein transport protein SEC23"/>
    <property type="match status" value="1"/>
</dbReference>
<dbReference type="FunFam" id="3.40.20.10:FF:000006">
    <property type="entry name" value="Protein transport protein SEC23"/>
    <property type="match status" value="1"/>
</dbReference>
<dbReference type="FunFam" id="3.40.50.410:FF:000008">
    <property type="entry name" value="Protein transport protein SEC23"/>
    <property type="match status" value="1"/>
</dbReference>
<dbReference type="Gene3D" id="2.60.40.1670">
    <property type="entry name" value="beta-sandwich domain of Sec23/24"/>
    <property type="match status" value="1"/>
</dbReference>
<dbReference type="Gene3D" id="1.20.120.730">
    <property type="entry name" value="Sec23/Sec24 helical domain"/>
    <property type="match status" value="1"/>
</dbReference>
<dbReference type="Gene3D" id="3.40.20.10">
    <property type="entry name" value="Severin"/>
    <property type="match status" value="1"/>
</dbReference>
<dbReference type="Gene3D" id="3.40.50.410">
    <property type="entry name" value="von Willebrand factor, type A domain"/>
    <property type="match status" value="1"/>
</dbReference>
<dbReference type="Gene3D" id="2.30.30.380">
    <property type="entry name" value="Zn-finger domain of Sec23/24"/>
    <property type="match status" value="1"/>
</dbReference>
<dbReference type="InterPro" id="IPR029006">
    <property type="entry name" value="ADF-H/Gelsolin-like_dom_sf"/>
</dbReference>
<dbReference type="InterPro" id="IPR007123">
    <property type="entry name" value="Gelsolin-like_dom"/>
</dbReference>
<dbReference type="InterPro" id="IPR036180">
    <property type="entry name" value="Gelsolin-like_dom_sf"/>
</dbReference>
<dbReference type="InterPro" id="IPR037364">
    <property type="entry name" value="Sec23"/>
</dbReference>
<dbReference type="InterPro" id="IPR006900">
    <property type="entry name" value="Sec23/24_helical_dom"/>
</dbReference>
<dbReference type="InterPro" id="IPR036175">
    <property type="entry name" value="Sec23/24_helical_dom_sf"/>
</dbReference>
<dbReference type="InterPro" id="IPR006896">
    <property type="entry name" value="Sec23/24_trunk_dom"/>
</dbReference>
<dbReference type="InterPro" id="IPR012990">
    <property type="entry name" value="Sec23_24_beta_S"/>
</dbReference>
<dbReference type="InterPro" id="IPR037550">
    <property type="entry name" value="Sec23_C"/>
</dbReference>
<dbReference type="InterPro" id="IPR036465">
    <property type="entry name" value="vWFA_dom_sf"/>
</dbReference>
<dbReference type="InterPro" id="IPR006895">
    <property type="entry name" value="Znf_Sec23_Sec24"/>
</dbReference>
<dbReference type="InterPro" id="IPR036174">
    <property type="entry name" value="Znf_Sec23_Sec24_sf"/>
</dbReference>
<dbReference type="PANTHER" id="PTHR11141">
    <property type="entry name" value="PROTEIN TRANSPORT PROTEIN SEC23"/>
    <property type="match status" value="1"/>
</dbReference>
<dbReference type="PANTHER" id="PTHR11141:SF0">
    <property type="entry name" value="PROTEIN TRANSPORT PROTEIN SEC23"/>
    <property type="match status" value="1"/>
</dbReference>
<dbReference type="Pfam" id="PF00626">
    <property type="entry name" value="Gelsolin"/>
    <property type="match status" value="1"/>
</dbReference>
<dbReference type="Pfam" id="PF08033">
    <property type="entry name" value="Sec23_BS"/>
    <property type="match status" value="1"/>
</dbReference>
<dbReference type="Pfam" id="PF04815">
    <property type="entry name" value="Sec23_helical"/>
    <property type="match status" value="1"/>
</dbReference>
<dbReference type="Pfam" id="PF04811">
    <property type="entry name" value="Sec23_trunk"/>
    <property type="match status" value="1"/>
</dbReference>
<dbReference type="Pfam" id="PF04810">
    <property type="entry name" value="zf-Sec23_Sec24"/>
    <property type="match status" value="1"/>
</dbReference>
<dbReference type="SUPFAM" id="SSF81995">
    <property type="entry name" value="beta-sandwich domain of Sec23/24"/>
    <property type="match status" value="1"/>
</dbReference>
<dbReference type="SUPFAM" id="SSF82754">
    <property type="entry name" value="C-terminal, gelsolin-like domain of Sec23/24"/>
    <property type="match status" value="1"/>
</dbReference>
<dbReference type="SUPFAM" id="SSF81811">
    <property type="entry name" value="Helical domain of Sec23/24"/>
    <property type="match status" value="1"/>
</dbReference>
<dbReference type="SUPFAM" id="SSF53300">
    <property type="entry name" value="vWA-like"/>
    <property type="match status" value="1"/>
</dbReference>
<dbReference type="SUPFAM" id="SSF82919">
    <property type="entry name" value="Zn-finger domain of Sec23/24"/>
    <property type="match status" value="1"/>
</dbReference>
<reference key="1">
    <citation type="journal article" date="2009" name="Genome Res.">
        <title>Comparative genomic analyses of the human fungal pathogens Coccidioides and their relatives.</title>
        <authorList>
            <person name="Sharpton T.J."/>
            <person name="Stajich J.E."/>
            <person name="Rounsley S.D."/>
            <person name="Gardner M.J."/>
            <person name="Wortman J.R."/>
            <person name="Jordar V.S."/>
            <person name="Maiti R."/>
            <person name="Kodira C.D."/>
            <person name="Neafsey D.E."/>
            <person name="Zeng Q."/>
            <person name="Hung C.-Y."/>
            <person name="McMahan C."/>
            <person name="Muszewska A."/>
            <person name="Grynberg M."/>
            <person name="Mandel M.A."/>
            <person name="Kellner E.M."/>
            <person name="Barker B.M."/>
            <person name="Galgiani J.N."/>
            <person name="Orbach M.J."/>
            <person name="Kirkland T.N."/>
            <person name="Cole G.T."/>
            <person name="Henn M.R."/>
            <person name="Birren B.W."/>
            <person name="Taylor J.W."/>
        </authorList>
    </citation>
    <scope>NUCLEOTIDE SEQUENCE [LARGE SCALE GENOMIC DNA]</scope>
    <source>
        <strain>RS</strain>
    </source>
</reference>
<reference key="2">
    <citation type="journal article" date="2010" name="Genome Res.">
        <title>Population genomic sequencing of Coccidioides fungi reveals recent hybridization and transposon control.</title>
        <authorList>
            <person name="Neafsey D.E."/>
            <person name="Barker B.M."/>
            <person name="Sharpton T.J."/>
            <person name="Stajich J.E."/>
            <person name="Park D.J."/>
            <person name="Whiston E."/>
            <person name="Hung C.-Y."/>
            <person name="McMahan C."/>
            <person name="White J."/>
            <person name="Sykes S."/>
            <person name="Heiman D."/>
            <person name="Young S."/>
            <person name="Zeng Q."/>
            <person name="Abouelleil A."/>
            <person name="Aftuck L."/>
            <person name="Bessette D."/>
            <person name="Brown A."/>
            <person name="FitzGerald M."/>
            <person name="Lui A."/>
            <person name="Macdonald J.P."/>
            <person name="Priest M."/>
            <person name="Orbach M.J."/>
            <person name="Galgiani J.N."/>
            <person name="Kirkland T.N."/>
            <person name="Cole G.T."/>
            <person name="Birren B.W."/>
            <person name="Henn M.R."/>
            <person name="Taylor J.W."/>
            <person name="Rounsley S.D."/>
        </authorList>
    </citation>
    <scope>GENOME REANNOTATION</scope>
    <source>
        <strain>RS</strain>
    </source>
</reference>
<keyword id="KW-0963">Cytoplasm</keyword>
<keyword id="KW-0968">Cytoplasmic vesicle</keyword>
<keyword id="KW-0256">Endoplasmic reticulum</keyword>
<keyword id="KW-0931">ER-Golgi transport</keyword>
<keyword id="KW-0333">Golgi apparatus</keyword>
<keyword id="KW-0472">Membrane</keyword>
<keyword id="KW-0479">Metal-binding</keyword>
<keyword id="KW-0653">Protein transport</keyword>
<keyword id="KW-1185">Reference proteome</keyword>
<keyword id="KW-0813">Transport</keyword>
<keyword id="KW-0862">Zinc</keyword>
<organism>
    <name type="scientific">Coccidioides immitis (strain RS)</name>
    <name type="common">Valley fever fungus</name>
    <dbReference type="NCBI Taxonomy" id="246410"/>
    <lineage>
        <taxon>Eukaryota</taxon>
        <taxon>Fungi</taxon>
        <taxon>Dikarya</taxon>
        <taxon>Ascomycota</taxon>
        <taxon>Pezizomycotina</taxon>
        <taxon>Eurotiomycetes</taxon>
        <taxon>Eurotiomycetidae</taxon>
        <taxon>Onygenales</taxon>
        <taxon>Onygenaceae</taxon>
        <taxon>Coccidioides</taxon>
    </lineage>
</organism>